<protein>
    <recommendedName>
        <fullName evidence="1">Histidine--tRNA ligase</fullName>
        <ecNumber evidence="1">6.1.1.21</ecNumber>
    </recommendedName>
    <alternativeName>
        <fullName evidence="1">Histidyl-tRNA synthetase</fullName>
        <shortName evidence="1">HisRS</shortName>
    </alternativeName>
</protein>
<sequence>MASKPSIPKGTRDFSPAEVSKRQYIIQTIKANFEKFGFQPIETPSFENSDTLMGKYGEEGDRLIFKILNSGNFFYNKSKIELPESIEELQLNSAEKITLEQRIELNKFTGKISEKALRYDLTVPFARYVVQHQSEIEFPFKRYQIQPVWRADNPQKGRFREFFQCDADVVGSKSLWQEVELVQLYDTVFTSLGLEGVTIKINNRKILSGIAEVIGASDKLIDFTVALDKLDKIGEDGVKKEMIEKGISEDALVKVQPLFNFSGTFADKIAQLSDLLSSSEEGMKGVEELKFICDNVADLGLSTAVLDLDVTLARGLNYYTGAIFEVAAPKTVAMGSIGGGGRYDDLTGIFGLKNMSGVGISFGLDRIYLVLEELQLFPETVAATSKAIFLNFGDKEALYASKAIQKLRQENIKVELYPDNVKVGKQFQYADKRLIPFAVLVGDQEINSNSYALKNLVTGEQVSVDFEGLKKTLLG</sequence>
<organism>
    <name type="scientific">Flavobacterium johnsoniae (strain ATCC 17061 / DSM 2064 / JCM 8514 / BCRC 14874 / CCUG 350202 / NBRC 14942 / NCIMB 11054 / UW101)</name>
    <name type="common">Cytophaga johnsonae</name>
    <dbReference type="NCBI Taxonomy" id="376686"/>
    <lineage>
        <taxon>Bacteria</taxon>
        <taxon>Pseudomonadati</taxon>
        <taxon>Bacteroidota</taxon>
        <taxon>Flavobacteriia</taxon>
        <taxon>Flavobacteriales</taxon>
        <taxon>Flavobacteriaceae</taxon>
        <taxon>Flavobacterium</taxon>
    </lineage>
</organism>
<comment type="catalytic activity">
    <reaction evidence="1">
        <text>tRNA(His) + L-histidine + ATP = L-histidyl-tRNA(His) + AMP + diphosphate + H(+)</text>
        <dbReference type="Rhea" id="RHEA:17313"/>
        <dbReference type="Rhea" id="RHEA-COMP:9665"/>
        <dbReference type="Rhea" id="RHEA-COMP:9689"/>
        <dbReference type="ChEBI" id="CHEBI:15378"/>
        <dbReference type="ChEBI" id="CHEBI:30616"/>
        <dbReference type="ChEBI" id="CHEBI:33019"/>
        <dbReference type="ChEBI" id="CHEBI:57595"/>
        <dbReference type="ChEBI" id="CHEBI:78442"/>
        <dbReference type="ChEBI" id="CHEBI:78527"/>
        <dbReference type="ChEBI" id="CHEBI:456215"/>
        <dbReference type="EC" id="6.1.1.21"/>
    </reaction>
</comment>
<comment type="subunit">
    <text evidence="1">Homodimer.</text>
</comment>
<comment type="subcellular location">
    <subcellularLocation>
        <location evidence="1">Cytoplasm</location>
    </subcellularLocation>
</comment>
<comment type="similarity">
    <text evidence="1">Belongs to the class-II aminoacyl-tRNA synthetase family.</text>
</comment>
<gene>
    <name evidence="1" type="primary">hisS</name>
    <name type="ordered locus">Fjoh_5052</name>
</gene>
<accession>A5F9R5</accession>
<proteinExistence type="inferred from homology"/>
<feature type="chain" id="PRO_1000076271" description="Histidine--tRNA ligase">
    <location>
        <begin position="1"/>
        <end position="475"/>
    </location>
</feature>
<name>SYH_FLAJ1</name>
<evidence type="ECO:0000255" key="1">
    <source>
        <dbReference type="HAMAP-Rule" id="MF_00127"/>
    </source>
</evidence>
<keyword id="KW-0030">Aminoacyl-tRNA synthetase</keyword>
<keyword id="KW-0067">ATP-binding</keyword>
<keyword id="KW-0963">Cytoplasm</keyword>
<keyword id="KW-0436">Ligase</keyword>
<keyword id="KW-0547">Nucleotide-binding</keyword>
<keyword id="KW-0648">Protein biosynthesis</keyword>
<dbReference type="EC" id="6.1.1.21" evidence="1"/>
<dbReference type="EMBL" id="CP000685">
    <property type="protein sequence ID" value="ABQ08051.1"/>
    <property type="molecule type" value="Genomic_DNA"/>
</dbReference>
<dbReference type="RefSeq" id="WP_012027014.1">
    <property type="nucleotide sequence ID" value="NC_009441.1"/>
</dbReference>
<dbReference type="SMR" id="A5F9R5"/>
<dbReference type="STRING" id="376686.Fjoh_5052"/>
<dbReference type="KEGG" id="fjo:Fjoh_5052"/>
<dbReference type="eggNOG" id="COG0124">
    <property type="taxonomic scope" value="Bacteria"/>
</dbReference>
<dbReference type="HOGENOM" id="CLU_025113_3_0_10"/>
<dbReference type="OrthoDB" id="9800814at2"/>
<dbReference type="Proteomes" id="UP000006694">
    <property type="component" value="Chromosome"/>
</dbReference>
<dbReference type="GO" id="GO:0005737">
    <property type="term" value="C:cytoplasm"/>
    <property type="evidence" value="ECO:0007669"/>
    <property type="project" value="UniProtKB-SubCell"/>
</dbReference>
<dbReference type="GO" id="GO:0005524">
    <property type="term" value="F:ATP binding"/>
    <property type="evidence" value="ECO:0007669"/>
    <property type="project" value="UniProtKB-UniRule"/>
</dbReference>
<dbReference type="GO" id="GO:0004821">
    <property type="term" value="F:histidine-tRNA ligase activity"/>
    <property type="evidence" value="ECO:0007669"/>
    <property type="project" value="UniProtKB-UniRule"/>
</dbReference>
<dbReference type="GO" id="GO:0006427">
    <property type="term" value="P:histidyl-tRNA aminoacylation"/>
    <property type="evidence" value="ECO:0007669"/>
    <property type="project" value="UniProtKB-UniRule"/>
</dbReference>
<dbReference type="CDD" id="cd00773">
    <property type="entry name" value="HisRS-like_core"/>
    <property type="match status" value="1"/>
</dbReference>
<dbReference type="CDD" id="cd00859">
    <property type="entry name" value="HisRS_anticodon"/>
    <property type="match status" value="1"/>
</dbReference>
<dbReference type="FunFam" id="3.30.930.10:FF:000093">
    <property type="entry name" value="Histidine--tRNA ligase"/>
    <property type="match status" value="1"/>
</dbReference>
<dbReference type="Gene3D" id="3.40.50.800">
    <property type="entry name" value="Anticodon-binding domain"/>
    <property type="match status" value="1"/>
</dbReference>
<dbReference type="Gene3D" id="3.30.930.10">
    <property type="entry name" value="Bira Bifunctional Protein, Domain 2"/>
    <property type="match status" value="1"/>
</dbReference>
<dbReference type="HAMAP" id="MF_00127">
    <property type="entry name" value="His_tRNA_synth"/>
    <property type="match status" value="1"/>
</dbReference>
<dbReference type="InterPro" id="IPR006195">
    <property type="entry name" value="aa-tRNA-synth_II"/>
</dbReference>
<dbReference type="InterPro" id="IPR045864">
    <property type="entry name" value="aa-tRNA-synth_II/BPL/LPL"/>
</dbReference>
<dbReference type="InterPro" id="IPR004154">
    <property type="entry name" value="Anticodon-bd"/>
</dbReference>
<dbReference type="InterPro" id="IPR036621">
    <property type="entry name" value="Anticodon-bd_dom_sf"/>
</dbReference>
<dbReference type="InterPro" id="IPR015807">
    <property type="entry name" value="His-tRNA-ligase"/>
</dbReference>
<dbReference type="InterPro" id="IPR041715">
    <property type="entry name" value="HisRS-like_core"/>
</dbReference>
<dbReference type="InterPro" id="IPR004516">
    <property type="entry name" value="HisRS/HisZ"/>
</dbReference>
<dbReference type="InterPro" id="IPR033656">
    <property type="entry name" value="HisRS_anticodon"/>
</dbReference>
<dbReference type="NCBIfam" id="TIGR00442">
    <property type="entry name" value="hisS"/>
    <property type="match status" value="1"/>
</dbReference>
<dbReference type="PANTHER" id="PTHR11476:SF7">
    <property type="entry name" value="HISTIDINE--TRNA LIGASE"/>
    <property type="match status" value="1"/>
</dbReference>
<dbReference type="PANTHER" id="PTHR11476">
    <property type="entry name" value="HISTIDYL-TRNA SYNTHETASE"/>
    <property type="match status" value="1"/>
</dbReference>
<dbReference type="Pfam" id="PF03129">
    <property type="entry name" value="HGTP_anticodon"/>
    <property type="match status" value="1"/>
</dbReference>
<dbReference type="Pfam" id="PF13393">
    <property type="entry name" value="tRNA-synt_His"/>
    <property type="match status" value="1"/>
</dbReference>
<dbReference type="PIRSF" id="PIRSF001549">
    <property type="entry name" value="His-tRNA_synth"/>
    <property type="match status" value="1"/>
</dbReference>
<dbReference type="SUPFAM" id="SSF52954">
    <property type="entry name" value="Class II aaRS ABD-related"/>
    <property type="match status" value="1"/>
</dbReference>
<dbReference type="SUPFAM" id="SSF55681">
    <property type="entry name" value="Class II aaRS and biotin synthetases"/>
    <property type="match status" value="1"/>
</dbReference>
<dbReference type="PROSITE" id="PS50862">
    <property type="entry name" value="AA_TRNA_LIGASE_II"/>
    <property type="match status" value="1"/>
</dbReference>
<reference key="1">
    <citation type="journal article" date="2009" name="Appl. Environ. Microbiol.">
        <title>Novel features of the polysaccharide-digesting gliding bacterium Flavobacterium johnsoniae as revealed by genome sequence analysis.</title>
        <authorList>
            <person name="McBride M.J."/>
            <person name="Xie G."/>
            <person name="Martens E.C."/>
            <person name="Lapidus A."/>
            <person name="Henrissat B."/>
            <person name="Rhodes R.G."/>
            <person name="Goltsman E."/>
            <person name="Wang W."/>
            <person name="Xu J."/>
            <person name="Hunnicutt D.W."/>
            <person name="Staroscik A.M."/>
            <person name="Hoover T.R."/>
            <person name="Cheng Y.Q."/>
            <person name="Stein J.L."/>
        </authorList>
    </citation>
    <scope>NUCLEOTIDE SEQUENCE [LARGE SCALE GENOMIC DNA]</scope>
    <source>
        <strain>ATCC 17061 / DSM 2064 / JCM 8514 / BCRC 14874 / CCUG 350202 / NBRC 14942 / NCIMB 11054 / UW101</strain>
    </source>
</reference>